<proteinExistence type="inferred from homology"/>
<reference key="1">
    <citation type="journal article" date="2009" name="BMC Genomics">
        <title>Complete genome sequence of the sugarcane nitrogen-fixing endophyte Gluconacetobacter diazotrophicus Pal5.</title>
        <authorList>
            <person name="Bertalan M."/>
            <person name="Albano R."/>
            <person name="de Padua V."/>
            <person name="Rouws L."/>
            <person name="Rojas C."/>
            <person name="Hemerly A."/>
            <person name="Teixeira K."/>
            <person name="Schwab S."/>
            <person name="Araujo J."/>
            <person name="Oliveira A."/>
            <person name="Franca L."/>
            <person name="Magalhaes V."/>
            <person name="Alqueres S."/>
            <person name="Cardoso A."/>
            <person name="Almeida W."/>
            <person name="Loureiro M.M."/>
            <person name="Nogueira E."/>
            <person name="Cidade D."/>
            <person name="Oliveira D."/>
            <person name="Simao T."/>
            <person name="Macedo J."/>
            <person name="Valadao A."/>
            <person name="Dreschsel M."/>
            <person name="Freitas F."/>
            <person name="Vidal M."/>
            <person name="Guedes H."/>
            <person name="Rodrigues E."/>
            <person name="Meneses C."/>
            <person name="Brioso P."/>
            <person name="Pozzer L."/>
            <person name="Figueiredo D."/>
            <person name="Montano H."/>
            <person name="Junior J."/>
            <person name="de Souza Filho G."/>
            <person name="Martin Quintana Flores V."/>
            <person name="Ferreira B."/>
            <person name="Branco A."/>
            <person name="Gonzalez P."/>
            <person name="Guillobel H."/>
            <person name="Lemos M."/>
            <person name="Seibel L."/>
            <person name="Macedo J."/>
            <person name="Alves-Ferreira M."/>
            <person name="Sachetto-Martins G."/>
            <person name="Coelho A."/>
            <person name="Santos E."/>
            <person name="Amaral G."/>
            <person name="Neves A."/>
            <person name="Pacheco A.B."/>
            <person name="Carvalho D."/>
            <person name="Lery L."/>
            <person name="Bisch P."/>
            <person name="Rossle S.C."/>
            <person name="Urmenyi T."/>
            <person name="Rael Pereira A."/>
            <person name="Silva R."/>
            <person name="Rondinelli E."/>
            <person name="von Kruger W."/>
            <person name="Martins O."/>
            <person name="Baldani J.I."/>
            <person name="Ferreira P.C."/>
        </authorList>
    </citation>
    <scope>NUCLEOTIDE SEQUENCE [LARGE SCALE GENOMIC DNA]</scope>
    <source>
        <strain>ATCC 49037 / DSM 5601 / CCUG 37298 / CIP 103539 / LMG 7603 / PAl5</strain>
    </source>
</reference>
<reference key="2">
    <citation type="journal article" date="2010" name="Stand. Genomic Sci.">
        <title>Two genome sequences of the same bacterial strain, Gluconacetobacter diazotrophicus PAl 5, suggest a new standard in genome sequence submission.</title>
        <authorList>
            <person name="Giongo A."/>
            <person name="Tyler H.L."/>
            <person name="Zipperer U.N."/>
            <person name="Triplett E.W."/>
        </authorList>
    </citation>
    <scope>NUCLEOTIDE SEQUENCE [LARGE SCALE GENOMIC DNA]</scope>
    <source>
        <strain>ATCC 49037 / DSM 5601 / CCUG 37298 / CIP 103539 / LMG 7603 / PAl5</strain>
    </source>
</reference>
<feature type="chain" id="PRO_0000412658" description="GTPase HflX">
    <location>
        <begin position="1"/>
        <end position="450"/>
    </location>
</feature>
<feature type="domain" description="Hflx-type G" evidence="1">
    <location>
        <begin position="230"/>
        <end position="395"/>
    </location>
</feature>
<feature type="region of interest" description="Disordered" evidence="2">
    <location>
        <begin position="79"/>
        <end position="110"/>
    </location>
</feature>
<feature type="region of interest" description="Disordered" evidence="2">
    <location>
        <begin position="173"/>
        <end position="196"/>
    </location>
</feature>
<feature type="compositionally biased region" description="Gly residues" evidence="2">
    <location>
        <begin position="178"/>
        <end position="189"/>
    </location>
</feature>
<feature type="binding site" evidence="1">
    <location>
        <begin position="236"/>
        <end position="243"/>
    </location>
    <ligand>
        <name>GTP</name>
        <dbReference type="ChEBI" id="CHEBI:37565"/>
    </ligand>
</feature>
<feature type="binding site" evidence="1">
    <location>
        <position position="243"/>
    </location>
    <ligand>
        <name>Mg(2+)</name>
        <dbReference type="ChEBI" id="CHEBI:18420"/>
    </ligand>
</feature>
<feature type="binding site" evidence="1">
    <location>
        <begin position="261"/>
        <end position="265"/>
    </location>
    <ligand>
        <name>GTP</name>
        <dbReference type="ChEBI" id="CHEBI:37565"/>
    </ligand>
</feature>
<feature type="binding site" evidence="1">
    <location>
        <position position="263"/>
    </location>
    <ligand>
        <name>Mg(2+)</name>
        <dbReference type="ChEBI" id="CHEBI:18420"/>
    </ligand>
</feature>
<feature type="binding site" evidence="1">
    <location>
        <begin position="283"/>
        <end position="286"/>
    </location>
    <ligand>
        <name>GTP</name>
        <dbReference type="ChEBI" id="CHEBI:37565"/>
    </ligand>
</feature>
<feature type="binding site" evidence="1">
    <location>
        <begin position="349"/>
        <end position="352"/>
    </location>
    <ligand>
        <name>GTP</name>
        <dbReference type="ChEBI" id="CHEBI:37565"/>
    </ligand>
</feature>
<feature type="binding site" evidence="1">
    <location>
        <begin position="373"/>
        <end position="375"/>
    </location>
    <ligand>
        <name>GTP</name>
        <dbReference type="ChEBI" id="CHEBI:37565"/>
    </ligand>
</feature>
<feature type="sequence conflict" description="In Ref. 2; ACI51987." evidence="3" ref="2">
    <original>PEP</original>
    <variation>AEA</variation>
    <location>
        <begin position="103"/>
        <end position="105"/>
    </location>
</feature>
<feature type="sequence conflict" description="In Ref. 2; ACI51987." evidence="3" ref="2">
    <original>S</original>
    <variation>T</variation>
    <location>
        <position position="177"/>
    </location>
</feature>
<feature type="sequence conflict" description="In Ref. 2; ACI51987." evidence="3" ref="2">
    <original>A</original>
    <variation>T</variation>
    <location>
        <position position="341"/>
    </location>
</feature>
<feature type="sequence conflict" description="In Ref. 2; ACI51987." evidence="3" ref="2">
    <original>APG</original>
    <variation>TPA</variation>
    <location>
        <begin position="376"/>
        <end position="378"/>
    </location>
</feature>
<gene>
    <name evidence="1" type="primary">hflX</name>
    <name type="ordered locus">GDI0162</name>
    <name type="ordered locus">Gdia_2232</name>
</gene>
<accession>A9H253</accession>
<accession>B5ZEJ7</accession>
<sequence length="450" mass="48648">METKPPIPLAVLVGIQTPDVDDIAHEASLAELGRLVKTLGYAVVGTVSQKREGTGAALLLGSGKLAELAALTGGTGVVTSMAPPPKSKARQRFEGAAEGAAPPEPDPDAARRPEFVIVDHELSPSQIRNLERATGAQVLDRTGVIVEIFHRHANTREARLQVEMARLKYVAPRLRESSGGGGRQQGPGAGESTLALDRRKIRDRLAELKTQLDAVQRDGDQRRSARRDQLRVALVGYTNAGKSSLMRALTGSQVLVEDKLFATLDTTVRILQPETRPRILVSDTVGFIKQLPHDLVASFRSTLAEALEASLLLFVVDASDPTYESQLEVTRGVLREIGADAVPSRLVLNKMDRLDPAARAALRDKHPDAIMLSAHAPGDVSALRDTLIAFFEAEMVEDTLVLPYAKQGLIGEIYESARVLSEDHDETGRVLKVRALPAAITRLKRSLAAR</sequence>
<dbReference type="EMBL" id="AM889285">
    <property type="protein sequence ID" value="CAP54105.1"/>
    <property type="status" value="ALT_INIT"/>
    <property type="molecule type" value="Genomic_DNA"/>
</dbReference>
<dbReference type="EMBL" id="CP001189">
    <property type="protein sequence ID" value="ACI51987.1"/>
    <property type="molecule type" value="Genomic_DNA"/>
</dbReference>
<dbReference type="RefSeq" id="WP_197535943.1">
    <property type="nucleotide sequence ID" value="NC_010125.1"/>
</dbReference>
<dbReference type="SMR" id="A9H253"/>
<dbReference type="STRING" id="272568.GDI0162"/>
<dbReference type="KEGG" id="gdi:GDI0162"/>
<dbReference type="KEGG" id="gdj:Gdia_2232"/>
<dbReference type="eggNOG" id="COG2262">
    <property type="taxonomic scope" value="Bacteria"/>
</dbReference>
<dbReference type="HOGENOM" id="CLU_019597_2_1_5"/>
<dbReference type="Proteomes" id="UP000001176">
    <property type="component" value="Chromosome"/>
</dbReference>
<dbReference type="GO" id="GO:0005737">
    <property type="term" value="C:cytoplasm"/>
    <property type="evidence" value="ECO:0007669"/>
    <property type="project" value="UniProtKB-SubCell"/>
</dbReference>
<dbReference type="GO" id="GO:0005525">
    <property type="term" value="F:GTP binding"/>
    <property type="evidence" value="ECO:0007669"/>
    <property type="project" value="UniProtKB-UniRule"/>
</dbReference>
<dbReference type="GO" id="GO:0003924">
    <property type="term" value="F:GTPase activity"/>
    <property type="evidence" value="ECO:0007669"/>
    <property type="project" value="UniProtKB-UniRule"/>
</dbReference>
<dbReference type="GO" id="GO:0046872">
    <property type="term" value="F:metal ion binding"/>
    <property type="evidence" value="ECO:0007669"/>
    <property type="project" value="UniProtKB-KW"/>
</dbReference>
<dbReference type="GO" id="GO:0043022">
    <property type="term" value="F:ribosome binding"/>
    <property type="evidence" value="ECO:0007669"/>
    <property type="project" value="TreeGrafter"/>
</dbReference>
<dbReference type="CDD" id="cd01878">
    <property type="entry name" value="HflX"/>
    <property type="match status" value="1"/>
</dbReference>
<dbReference type="Gene3D" id="6.10.250.2860">
    <property type="match status" value="1"/>
</dbReference>
<dbReference type="Gene3D" id="3.40.50.11060">
    <property type="entry name" value="GTPase HflX, N-terminal domain"/>
    <property type="match status" value="1"/>
</dbReference>
<dbReference type="Gene3D" id="3.40.50.300">
    <property type="entry name" value="P-loop containing nucleotide triphosphate hydrolases"/>
    <property type="match status" value="1"/>
</dbReference>
<dbReference type="HAMAP" id="MF_00900">
    <property type="entry name" value="GTPase_HflX"/>
    <property type="match status" value="1"/>
</dbReference>
<dbReference type="InterPro" id="IPR030394">
    <property type="entry name" value="G_HFLX_dom"/>
</dbReference>
<dbReference type="InterPro" id="IPR006073">
    <property type="entry name" value="GTP-bd"/>
</dbReference>
<dbReference type="InterPro" id="IPR032305">
    <property type="entry name" value="GTP-bd_M"/>
</dbReference>
<dbReference type="InterPro" id="IPR016496">
    <property type="entry name" value="GTPase_HflX"/>
</dbReference>
<dbReference type="InterPro" id="IPR025121">
    <property type="entry name" value="GTPase_HflX_N"/>
</dbReference>
<dbReference type="InterPro" id="IPR042108">
    <property type="entry name" value="GTPase_HflX_N_sf"/>
</dbReference>
<dbReference type="InterPro" id="IPR027417">
    <property type="entry name" value="P-loop_NTPase"/>
</dbReference>
<dbReference type="NCBIfam" id="TIGR03156">
    <property type="entry name" value="GTP_HflX"/>
    <property type="match status" value="1"/>
</dbReference>
<dbReference type="PANTHER" id="PTHR10229:SF0">
    <property type="entry name" value="GTP-BINDING PROTEIN 6-RELATED"/>
    <property type="match status" value="1"/>
</dbReference>
<dbReference type="PANTHER" id="PTHR10229">
    <property type="entry name" value="GTP-BINDING PROTEIN HFLX"/>
    <property type="match status" value="1"/>
</dbReference>
<dbReference type="Pfam" id="PF16360">
    <property type="entry name" value="GTP-bdg_M"/>
    <property type="match status" value="1"/>
</dbReference>
<dbReference type="Pfam" id="PF13167">
    <property type="entry name" value="GTP-bdg_N"/>
    <property type="match status" value="2"/>
</dbReference>
<dbReference type="Pfam" id="PF01926">
    <property type="entry name" value="MMR_HSR1"/>
    <property type="match status" value="1"/>
</dbReference>
<dbReference type="PIRSF" id="PIRSF006809">
    <property type="entry name" value="GTP-binding_hflX_prd"/>
    <property type="match status" value="1"/>
</dbReference>
<dbReference type="PRINTS" id="PR00326">
    <property type="entry name" value="GTP1OBG"/>
</dbReference>
<dbReference type="SUPFAM" id="SSF52540">
    <property type="entry name" value="P-loop containing nucleoside triphosphate hydrolases"/>
    <property type="match status" value="1"/>
</dbReference>
<dbReference type="PROSITE" id="PS51705">
    <property type="entry name" value="G_HFLX"/>
    <property type="match status" value="1"/>
</dbReference>
<protein>
    <recommendedName>
        <fullName evidence="1">GTPase HflX</fullName>
    </recommendedName>
    <alternativeName>
        <fullName evidence="1">GTP-binding protein HflX</fullName>
    </alternativeName>
</protein>
<comment type="function">
    <text evidence="1">GTPase that associates with the 50S ribosomal subunit and may have a role during protein synthesis or ribosome biogenesis.</text>
</comment>
<comment type="cofactor">
    <cofactor evidence="1">
        <name>Mg(2+)</name>
        <dbReference type="ChEBI" id="CHEBI:18420"/>
    </cofactor>
</comment>
<comment type="subunit">
    <text evidence="1">Monomer. Associates with the 50S ribosomal subunit.</text>
</comment>
<comment type="subcellular location">
    <subcellularLocation>
        <location evidence="1">Cytoplasm</location>
    </subcellularLocation>
    <text evidence="1">May associate with membranes.</text>
</comment>
<comment type="similarity">
    <text evidence="1">Belongs to the TRAFAC class OBG-HflX-like GTPase superfamily. HflX GTPase family.</text>
</comment>
<comment type="sequence caution" evidence="3">
    <conflict type="erroneous initiation">
        <sequence resource="EMBL-CDS" id="CAP54105"/>
    </conflict>
    <text>Extended N-terminus.</text>
</comment>
<evidence type="ECO:0000255" key="1">
    <source>
        <dbReference type="HAMAP-Rule" id="MF_00900"/>
    </source>
</evidence>
<evidence type="ECO:0000256" key="2">
    <source>
        <dbReference type="SAM" id="MobiDB-lite"/>
    </source>
</evidence>
<evidence type="ECO:0000305" key="3"/>
<name>HFLX_GLUDA</name>
<keyword id="KW-0963">Cytoplasm</keyword>
<keyword id="KW-0342">GTP-binding</keyword>
<keyword id="KW-0460">Magnesium</keyword>
<keyword id="KW-0479">Metal-binding</keyword>
<keyword id="KW-0547">Nucleotide-binding</keyword>
<keyword id="KW-1185">Reference proteome</keyword>
<organism>
    <name type="scientific">Gluconacetobacter diazotrophicus (strain ATCC 49037 / DSM 5601 / CCUG 37298 / CIP 103539 / LMG 7603 / PAl5)</name>
    <dbReference type="NCBI Taxonomy" id="272568"/>
    <lineage>
        <taxon>Bacteria</taxon>
        <taxon>Pseudomonadati</taxon>
        <taxon>Pseudomonadota</taxon>
        <taxon>Alphaproteobacteria</taxon>
        <taxon>Acetobacterales</taxon>
        <taxon>Acetobacteraceae</taxon>
        <taxon>Gluconacetobacter</taxon>
    </lineage>
</organism>